<keyword id="KW-0010">Activator</keyword>
<keyword id="KW-0025">Alternative splicing</keyword>
<keyword id="KW-0235">DNA replication</keyword>
<keyword id="KW-0238">DNA-binding</keyword>
<keyword id="KW-0488">Methylation</keyword>
<keyword id="KW-0539">Nucleus</keyword>
<keyword id="KW-0597">Phosphoprotein</keyword>
<keyword id="KW-1267">Proteomics identification</keyword>
<keyword id="KW-1185">Reference proteome</keyword>
<keyword id="KW-0804">Transcription</keyword>
<keyword id="KW-0805">Transcription regulation</keyword>
<name>NFIA_HUMAN</name>
<organism>
    <name type="scientific">Homo sapiens</name>
    <name type="common">Human</name>
    <dbReference type="NCBI Taxonomy" id="9606"/>
    <lineage>
        <taxon>Eukaryota</taxon>
        <taxon>Metazoa</taxon>
        <taxon>Chordata</taxon>
        <taxon>Craniata</taxon>
        <taxon>Vertebrata</taxon>
        <taxon>Euteleostomi</taxon>
        <taxon>Mammalia</taxon>
        <taxon>Eutheria</taxon>
        <taxon>Euarchontoglires</taxon>
        <taxon>Primates</taxon>
        <taxon>Haplorrhini</taxon>
        <taxon>Catarrhini</taxon>
        <taxon>Hominidae</taxon>
        <taxon>Homo</taxon>
    </lineage>
</organism>
<comment type="function">
    <text>Recognizes and binds the palindromic sequence 5'-TTGGCNNNNNGCCAA-3' present in viral and cellular promoters and in the origin of replication of adenovirus type 2. These proteins are individually capable of activating transcription and replication.</text>
</comment>
<comment type="subunit">
    <text>Binds DNA as a homodimer.</text>
</comment>
<comment type="interaction">
    <interactant intactId="EBI-12119652">
        <id>Q12857-2</id>
    </interactant>
    <interactant intactId="EBI-746969">
        <id>Q9H0R8</id>
        <label>GABARAPL1</label>
    </interactant>
    <organismsDiffer>false</organismsDiffer>
    <experiments>3</experiments>
</comment>
<comment type="interaction">
    <interactant intactId="EBI-12119652">
        <id>Q12857-2</id>
    </interactant>
    <interactant intactId="EBI-16430952">
        <id>A0A0S2Z4H3</id>
        <label>NFIB</label>
    </interactant>
    <organismsDiffer>false</organismsDiffer>
    <experiments>3</experiments>
</comment>
<comment type="interaction">
    <interactant intactId="EBI-12119652">
        <id>Q12857-2</id>
    </interactant>
    <interactant intactId="EBI-742388">
        <id>Q9H8W4</id>
        <label>PLEKHF2</label>
    </interactant>
    <organismsDiffer>false</organismsDiffer>
    <experiments>3</experiments>
</comment>
<comment type="subcellular location">
    <subcellularLocation>
        <location>Nucleus</location>
    </subcellularLocation>
</comment>
<comment type="alternative products">
    <event type="alternative splicing"/>
    <isoform>
        <id>Q12857-1</id>
        <name>1</name>
        <sequence type="displayed"/>
    </isoform>
    <isoform>
        <id>Q12857-2</id>
        <name>2</name>
        <sequence type="described" ref="VSP_036620"/>
    </isoform>
    <isoform>
        <id>Q12857-3</id>
        <name>3</name>
        <sequence type="described" ref="VSP_046884"/>
    </isoform>
    <isoform>
        <id>Q12857-4</id>
        <name>4</name>
        <sequence type="described" ref="VSP_046883"/>
    </isoform>
</comment>
<comment type="domain">
    <text evidence="7">The 9aaTAD motif is a transactivation domain present in a large number of yeast and animal transcription factors.</text>
</comment>
<comment type="disease" evidence="5 6">
    <disease id="DI-04979">
        <name>Brain malformations with or without urinary tract defects</name>
        <acronym>BRMUTD</acronym>
        <description>A syndrome characterized by corpus callosum hypoplasia or agenesis, hydrocephalus or ventricular enlargement, developmental delay, and urinary tract defects.</description>
        <dbReference type="MIM" id="613735"/>
    </disease>
    <text>The disease is caused by variants affecting the gene represented in this entry.</text>
</comment>
<comment type="similarity">
    <text evidence="3">Belongs to the CTF/NF-I family.</text>
</comment>
<comment type="sequence caution" evidence="10">
    <conflict type="erroneous initiation">
        <sequence resource="EMBL-CDS" id="BAA92677"/>
    </conflict>
    <text>Extended N-terminus.</text>
</comment>
<evidence type="ECO:0000250" key="1">
    <source>
        <dbReference type="UniProtKB" id="P09414"/>
    </source>
</evidence>
<evidence type="ECO:0000250" key="2">
    <source>
        <dbReference type="UniProtKB" id="Q02780"/>
    </source>
</evidence>
<evidence type="ECO:0000255" key="3">
    <source>
        <dbReference type="PROSITE-ProRule" id="PRU00436"/>
    </source>
</evidence>
<evidence type="ECO:0000256" key="4">
    <source>
        <dbReference type="SAM" id="MobiDB-lite"/>
    </source>
</evidence>
<evidence type="ECO:0000269" key="5">
    <source>
    </source>
</evidence>
<evidence type="ECO:0000269" key="6">
    <source>
    </source>
</evidence>
<evidence type="ECO:0000269" key="7">
    <source>
    </source>
</evidence>
<evidence type="ECO:0000303" key="8">
    <source>
    </source>
</evidence>
<evidence type="ECO:0000303" key="9">
    <source>
    </source>
</evidence>
<evidence type="ECO:0000305" key="10"/>
<evidence type="ECO:0007744" key="11">
    <source>
    </source>
</evidence>
<evidence type="ECO:0007744" key="12">
    <source>
    </source>
</evidence>
<evidence type="ECO:0007744" key="13">
    <source>
    </source>
</evidence>
<evidence type="ECO:0007744" key="14">
    <source>
    </source>
</evidence>
<evidence type="ECO:0007744" key="15">
    <source>
    </source>
</evidence>
<evidence type="ECO:0007744" key="16">
    <source>
    </source>
</evidence>
<proteinExistence type="evidence at protein level"/>
<accession>Q12857</accession>
<accession>B4DRJ3</accession>
<accession>B4DS53</accession>
<accession>F5H0R0</accession>
<accession>F8W8W3</accession>
<accession>Q8TA97</accession>
<accession>Q9H3X9</accession>
<accession>Q9P2A9</accession>
<reference key="1">
    <citation type="journal article" date="2000" name="DNA Res.">
        <title>Prediction of the coding sequences of unidentified human genes. XVI. The complete sequences of 150 new cDNA clones from brain which code for large proteins in vitro.</title>
        <authorList>
            <person name="Nagase T."/>
            <person name="Kikuno R."/>
            <person name="Ishikawa K."/>
            <person name="Hirosawa M."/>
            <person name="Ohara O."/>
        </authorList>
    </citation>
    <scope>NUCLEOTIDE SEQUENCE [LARGE SCALE MRNA] (ISOFORM 1)</scope>
    <source>
        <tissue>Brain</tissue>
    </source>
</reference>
<reference key="2">
    <citation type="journal article" date="2004" name="Nat. Genet.">
        <title>Complete sequencing and characterization of 21,243 full-length human cDNAs.</title>
        <authorList>
            <person name="Ota T."/>
            <person name="Suzuki Y."/>
            <person name="Nishikawa T."/>
            <person name="Otsuki T."/>
            <person name="Sugiyama T."/>
            <person name="Irie R."/>
            <person name="Wakamatsu A."/>
            <person name="Hayashi K."/>
            <person name="Sato H."/>
            <person name="Nagai K."/>
            <person name="Kimura K."/>
            <person name="Makita H."/>
            <person name="Sekine M."/>
            <person name="Obayashi M."/>
            <person name="Nishi T."/>
            <person name="Shibahara T."/>
            <person name="Tanaka T."/>
            <person name="Ishii S."/>
            <person name="Yamamoto J."/>
            <person name="Saito K."/>
            <person name="Kawai Y."/>
            <person name="Isono Y."/>
            <person name="Nakamura Y."/>
            <person name="Nagahari K."/>
            <person name="Murakami K."/>
            <person name="Yasuda T."/>
            <person name="Iwayanagi T."/>
            <person name="Wagatsuma M."/>
            <person name="Shiratori A."/>
            <person name="Sudo H."/>
            <person name="Hosoiri T."/>
            <person name="Kaku Y."/>
            <person name="Kodaira H."/>
            <person name="Kondo H."/>
            <person name="Sugawara M."/>
            <person name="Takahashi M."/>
            <person name="Kanda K."/>
            <person name="Yokoi T."/>
            <person name="Furuya T."/>
            <person name="Kikkawa E."/>
            <person name="Omura Y."/>
            <person name="Abe K."/>
            <person name="Kamihara K."/>
            <person name="Katsuta N."/>
            <person name="Sato K."/>
            <person name="Tanikawa M."/>
            <person name="Yamazaki M."/>
            <person name="Ninomiya K."/>
            <person name="Ishibashi T."/>
            <person name="Yamashita H."/>
            <person name="Murakawa K."/>
            <person name="Fujimori K."/>
            <person name="Tanai H."/>
            <person name="Kimata M."/>
            <person name="Watanabe M."/>
            <person name="Hiraoka S."/>
            <person name="Chiba Y."/>
            <person name="Ishida S."/>
            <person name="Ono Y."/>
            <person name="Takiguchi S."/>
            <person name="Watanabe S."/>
            <person name="Yosida M."/>
            <person name="Hotuta T."/>
            <person name="Kusano J."/>
            <person name="Kanehori K."/>
            <person name="Takahashi-Fujii A."/>
            <person name="Hara H."/>
            <person name="Tanase T.-O."/>
            <person name="Nomura Y."/>
            <person name="Togiya S."/>
            <person name="Komai F."/>
            <person name="Hara R."/>
            <person name="Takeuchi K."/>
            <person name="Arita M."/>
            <person name="Imose N."/>
            <person name="Musashino K."/>
            <person name="Yuuki H."/>
            <person name="Oshima A."/>
            <person name="Sasaki N."/>
            <person name="Aotsuka S."/>
            <person name="Yoshikawa Y."/>
            <person name="Matsunawa H."/>
            <person name="Ichihara T."/>
            <person name="Shiohata N."/>
            <person name="Sano S."/>
            <person name="Moriya S."/>
            <person name="Momiyama H."/>
            <person name="Satoh N."/>
            <person name="Takami S."/>
            <person name="Terashima Y."/>
            <person name="Suzuki O."/>
            <person name="Nakagawa S."/>
            <person name="Senoh A."/>
            <person name="Mizoguchi H."/>
            <person name="Goto Y."/>
            <person name="Shimizu F."/>
            <person name="Wakebe H."/>
            <person name="Hishigaki H."/>
            <person name="Watanabe T."/>
            <person name="Sugiyama A."/>
            <person name="Takemoto M."/>
            <person name="Kawakami B."/>
            <person name="Yamazaki M."/>
            <person name="Watanabe K."/>
            <person name="Kumagai A."/>
            <person name="Itakura S."/>
            <person name="Fukuzumi Y."/>
            <person name="Fujimori Y."/>
            <person name="Komiyama M."/>
            <person name="Tashiro H."/>
            <person name="Tanigami A."/>
            <person name="Fujiwara T."/>
            <person name="Ono T."/>
            <person name="Yamada K."/>
            <person name="Fujii Y."/>
            <person name="Ozaki K."/>
            <person name="Hirao M."/>
            <person name="Ohmori Y."/>
            <person name="Kawabata A."/>
            <person name="Hikiji T."/>
            <person name="Kobatake N."/>
            <person name="Inagaki H."/>
            <person name="Ikema Y."/>
            <person name="Okamoto S."/>
            <person name="Okitani R."/>
            <person name="Kawakami T."/>
            <person name="Noguchi S."/>
            <person name="Itoh T."/>
            <person name="Shigeta K."/>
            <person name="Senba T."/>
            <person name="Matsumura K."/>
            <person name="Nakajima Y."/>
            <person name="Mizuno T."/>
            <person name="Morinaga M."/>
            <person name="Sasaki M."/>
            <person name="Togashi T."/>
            <person name="Oyama M."/>
            <person name="Hata H."/>
            <person name="Watanabe M."/>
            <person name="Komatsu T."/>
            <person name="Mizushima-Sugano J."/>
            <person name="Satoh T."/>
            <person name="Shirai Y."/>
            <person name="Takahashi Y."/>
            <person name="Nakagawa K."/>
            <person name="Okumura K."/>
            <person name="Nagase T."/>
            <person name="Nomura N."/>
            <person name="Kikuchi H."/>
            <person name="Masuho Y."/>
            <person name="Yamashita R."/>
            <person name="Nakai K."/>
            <person name="Yada T."/>
            <person name="Nakamura Y."/>
            <person name="Ohara O."/>
            <person name="Isogai T."/>
            <person name="Sugano S."/>
        </authorList>
    </citation>
    <scope>NUCLEOTIDE SEQUENCE [LARGE SCALE MRNA] (ISOFORMS 3 AND 4)</scope>
    <source>
        <tissue>Brain</tissue>
    </source>
</reference>
<reference key="3">
    <citation type="journal article" date="2006" name="Nature">
        <title>The DNA sequence and biological annotation of human chromosome 1.</title>
        <authorList>
            <person name="Gregory S.G."/>
            <person name="Barlow K.F."/>
            <person name="McLay K.E."/>
            <person name="Kaul R."/>
            <person name="Swarbreck D."/>
            <person name="Dunham A."/>
            <person name="Scott C.E."/>
            <person name="Howe K.L."/>
            <person name="Woodfine K."/>
            <person name="Spencer C.C.A."/>
            <person name="Jones M.C."/>
            <person name="Gillson C."/>
            <person name="Searle S."/>
            <person name="Zhou Y."/>
            <person name="Kokocinski F."/>
            <person name="McDonald L."/>
            <person name="Evans R."/>
            <person name="Phillips K."/>
            <person name="Atkinson A."/>
            <person name="Cooper R."/>
            <person name="Jones C."/>
            <person name="Hall R.E."/>
            <person name="Andrews T.D."/>
            <person name="Lloyd C."/>
            <person name="Ainscough R."/>
            <person name="Almeida J.P."/>
            <person name="Ambrose K.D."/>
            <person name="Anderson F."/>
            <person name="Andrew R.W."/>
            <person name="Ashwell R.I.S."/>
            <person name="Aubin K."/>
            <person name="Babbage A.K."/>
            <person name="Bagguley C.L."/>
            <person name="Bailey J."/>
            <person name="Beasley H."/>
            <person name="Bethel G."/>
            <person name="Bird C.P."/>
            <person name="Bray-Allen S."/>
            <person name="Brown J.Y."/>
            <person name="Brown A.J."/>
            <person name="Buckley D."/>
            <person name="Burton J."/>
            <person name="Bye J."/>
            <person name="Carder C."/>
            <person name="Chapman J.C."/>
            <person name="Clark S.Y."/>
            <person name="Clarke G."/>
            <person name="Clee C."/>
            <person name="Cobley V."/>
            <person name="Collier R.E."/>
            <person name="Corby N."/>
            <person name="Coville G.J."/>
            <person name="Davies J."/>
            <person name="Deadman R."/>
            <person name="Dunn M."/>
            <person name="Earthrowl M."/>
            <person name="Ellington A.G."/>
            <person name="Errington H."/>
            <person name="Frankish A."/>
            <person name="Frankland J."/>
            <person name="French L."/>
            <person name="Garner P."/>
            <person name="Garnett J."/>
            <person name="Gay L."/>
            <person name="Ghori M.R.J."/>
            <person name="Gibson R."/>
            <person name="Gilby L.M."/>
            <person name="Gillett W."/>
            <person name="Glithero R.J."/>
            <person name="Grafham D.V."/>
            <person name="Griffiths C."/>
            <person name="Griffiths-Jones S."/>
            <person name="Grocock R."/>
            <person name="Hammond S."/>
            <person name="Harrison E.S.I."/>
            <person name="Hart E."/>
            <person name="Haugen E."/>
            <person name="Heath P.D."/>
            <person name="Holmes S."/>
            <person name="Holt K."/>
            <person name="Howden P.J."/>
            <person name="Hunt A.R."/>
            <person name="Hunt S.E."/>
            <person name="Hunter G."/>
            <person name="Isherwood J."/>
            <person name="James R."/>
            <person name="Johnson C."/>
            <person name="Johnson D."/>
            <person name="Joy A."/>
            <person name="Kay M."/>
            <person name="Kershaw J.K."/>
            <person name="Kibukawa M."/>
            <person name="Kimberley A.M."/>
            <person name="King A."/>
            <person name="Knights A.J."/>
            <person name="Lad H."/>
            <person name="Laird G."/>
            <person name="Lawlor S."/>
            <person name="Leongamornlert D.A."/>
            <person name="Lloyd D.M."/>
            <person name="Loveland J."/>
            <person name="Lovell J."/>
            <person name="Lush M.J."/>
            <person name="Lyne R."/>
            <person name="Martin S."/>
            <person name="Mashreghi-Mohammadi M."/>
            <person name="Matthews L."/>
            <person name="Matthews N.S.W."/>
            <person name="McLaren S."/>
            <person name="Milne S."/>
            <person name="Mistry S."/>
            <person name="Moore M.J.F."/>
            <person name="Nickerson T."/>
            <person name="O'Dell C.N."/>
            <person name="Oliver K."/>
            <person name="Palmeiri A."/>
            <person name="Palmer S.A."/>
            <person name="Parker A."/>
            <person name="Patel D."/>
            <person name="Pearce A.V."/>
            <person name="Peck A.I."/>
            <person name="Pelan S."/>
            <person name="Phelps K."/>
            <person name="Phillimore B.J."/>
            <person name="Plumb R."/>
            <person name="Rajan J."/>
            <person name="Raymond C."/>
            <person name="Rouse G."/>
            <person name="Saenphimmachak C."/>
            <person name="Sehra H.K."/>
            <person name="Sheridan E."/>
            <person name="Shownkeen R."/>
            <person name="Sims S."/>
            <person name="Skuce C.D."/>
            <person name="Smith M."/>
            <person name="Steward C."/>
            <person name="Subramanian S."/>
            <person name="Sycamore N."/>
            <person name="Tracey A."/>
            <person name="Tromans A."/>
            <person name="Van Helmond Z."/>
            <person name="Wall M."/>
            <person name="Wallis J.M."/>
            <person name="White S."/>
            <person name="Whitehead S.L."/>
            <person name="Wilkinson J.E."/>
            <person name="Willey D.L."/>
            <person name="Williams H."/>
            <person name="Wilming L."/>
            <person name="Wray P.W."/>
            <person name="Wu Z."/>
            <person name="Coulson A."/>
            <person name="Vaudin M."/>
            <person name="Sulston J.E."/>
            <person name="Durbin R.M."/>
            <person name="Hubbard T."/>
            <person name="Wooster R."/>
            <person name="Dunham I."/>
            <person name="Carter N.P."/>
            <person name="McVean G."/>
            <person name="Ross M.T."/>
            <person name="Harrow J."/>
            <person name="Olson M.V."/>
            <person name="Beck S."/>
            <person name="Rogers J."/>
            <person name="Bentley D.R."/>
        </authorList>
    </citation>
    <scope>NUCLEOTIDE SEQUENCE [LARGE SCALE GENOMIC DNA]</scope>
</reference>
<reference key="4">
    <citation type="submission" date="2005-09" db="EMBL/GenBank/DDBJ databases">
        <authorList>
            <person name="Mural R.J."/>
            <person name="Istrail S."/>
            <person name="Sutton G.G."/>
            <person name="Florea L."/>
            <person name="Halpern A.L."/>
            <person name="Mobarry C.M."/>
            <person name="Lippert R."/>
            <person name="Walenz B."/>
            <person name="Shatkay H."/>
            <person name="Dew I."/>
            <person name="Miller J.R."/>
            <person name="Flanigan M.J."/>
            <person name="Edwards N.J."/>
            <person name="Bolanos R."/>
            <person name="Fasulo D."/>
            <person name="Halldorsson B.V."/>
            <person name="Hannenhalli S."/>
            <person name="Turner R."/>
            <person name="Yooseph S."/>
            <person name="Lu F."/>
            <person name="Nusskern D.R."/>
            <person name="Shue B.C."/>
            <person name="Zheng X.H."/>
            <person name="Zhong F."/>
            <person name="Delcher A.L."/>
            <person name="Huson D.H."/>
            <person name="Kravitz S.A."/>
            <person name="Mouchard L."/>
            <person name="Reinert K."/>
            <person name="Remington K.A."/>
            <person name="Clark A.G."/>
            <person name="Waterman M.S."/>
            <person name="Eichler E.E."/>
            <person name="Adams M.D."/>
            <person name="Hunkapiller M.W."/>
            <person name="Myers E.W."/>
            <person name="Venter J.C."/>
        </authorList>
    </citation>
    <scope>NUCLEOTIDE SEQUENCE [LARGE SCALE GENOMIC DNA]</scope>
</reference>
<reference key="5">
    <citation type="journal article" date="2004" name="Genome Res.">
        <title>The status, quality, and expansion of the NIH full-length cDNA project: the Mammalian Gene Collection (MGC).</title>
        <authorList>
            <consortium name="The MGC Project Team"/>
        </authorList>
    </citation>
    <scope>NUCLEOTIDE SEQUENCE [LARGE SCALE MRNA] (ISOFORM 2)</scope>
    <source>
        <tissue>Skeletal muscle</tissue>
    </source>
</reference>
<reference key="6">
    <citation type="journal article" date="1995" name="Genomics">
        <title>Chromosomal localization of the four genes (NFIA, B, C, and X) for the human transcription factor nuclear factor I by FISH.</title>
        <authorList>
            <person name="Qian F."/>
            <person name="Kruse U."/>
            <person name="Lichter P."/>
            <person name="Sippel A.E."/>
        </authorList>
    </citation>
    <scope>NUCLEOTIDE SEQUENCE [MRNA] OF 19-243</scope>
</reference>
<reference key="7">
    <citation type="journal article" date="2008" name="J. Proteome Res.">
        <title>Combining protein-based IMAC, peptide-based IMAC, and MudPIT for efficient phosphoproteomic analysis.</title>
        <authorList>
            <person name="Cantin G.T."/>
            <person name="Yi W."/>
            <person name="Lu B."/>
            <person name="Park S.K."/>
            <person name="Xu T."/>
            <person name="Lee J.-D."/>
            <person name="Yates J.R. III"/>
        </authorList>
    </citation>
    <scope>PHOSPHORYLATION [LARGE SCALE ANALYSIS] AT SER-287</scope>
    <scope>IDENTIFICATION BY MASS SPECTROMETRY [LARGE SCALE ANALYSIS]</scope>
    <source>
        <tissue>Cervix carcinoma</tissue>
    </source>
</reference>
<reference key="8">
    <citation type="journal article" date="2008" name="Proc. Natl. Acad. Sci. U.S.A.">
        <title>A quantitative atlas of mitotic phosphorylation.</title>
        <authorList>
            <person name="Dephoure N."/>
            <person name="Zhou C."/>
            <person name="Villen J."/>
            <person name="Beausoleil S.A."/>
            <person name="Bakalarski C.E."/>
            <person name="Elledge S.J."/>
            <person name="Gygi S.P."/>
        </authorList>
    </citation>
    <scope>PHOSPHORYLATION [LARGE SCALE ANALYSIS] AT SER-258; SER-265; SER-280; SER-287; SER-300 AND SER-319</scope>
    <scope>IDENTIFICATION BY MASS SPECTROMETRY [LARGE SCALE ANALYSIS]</scope>
    <source>
        <tissue>Cervix carcinoma</tissue>
    </source>
</reference>
<reference key="9">
    <citation type="journal article" date="2009" name="Sci. Signal.">
        <title>Quantitative phosphoproteomic analysis of T cell receptor signaling reveals system-wide modulation of protein-protein interactions.</title>
        <authorList>
            <person name="Mayya V."/>
            <person name="Lundgren D.H."/>
            <person name="Hwang S.-I."/>
            <person name="Rezaul K."/>
            <person name="Wu L."/>
            <person name="Eng J.K."/>
            <person name="Rodionov V."/>
            <person name="Han D.K."/>
        </authorList>
    </citation>
    <scope>PHOSPHORYLATION [LARGE SCALE ANALYSIS] AT SER-280 AND SER-287</scope>
    <scope>IDENTIFICATION BY MASS SPECTROMETRY [LARGE SCALE ANALYSIS]</scope>
    <source>
        <tissue>Leukemic T-cell</tissue>
    </source>
</reference>
<reference key="10">
    <citation type="journal article" date="2010" name="Sci. Signal.">
        <title>Quantitative phosphoproteomics reveals widespread full phosphorylation site occupancy during mitosis.</title>
        <authorList>
            <person name="Olsen J.V."/>
            <person name="Vermeulen M."/>
            <person name="Santamaria A."/>
            <person name="Kumar C."/>
            <person name="Miller M.L."/>
            <person name="Jensen L.J."/>
            <person name="Gnad F."/>
            <person name="Cox J."/>
            <person name="Jensen T.S."/>
            <person name="Nigg E.A."/>
            <person name="Brunak S."/>
            <person name="Mann M."/>
        </authorList>
    </citation>
    <scope>PHOSPHORYLATION [LARGE SCALE ANALYSIS] AT SER-265; SER-280; SER-287; SER-300 AND SER-360</scope>
    <scope>IDENTIFICATION BY MASS SPECTROMETRY [LARGE SCALE ANALYSIS]</scope>
    <source>
        <tissue>Cervix carcinoma</tissue>
    </source>
</reference>
<reference key="11">
    <citation type="journal article" date="2013" name="J. Proteome Res.">
        <title>Toward a comprehensive characterization of a human cancer cell phosphoproteome.</title>
        <authorList>
            <person name="Zhou H."/>
            <person name="Di Palma S."/>
            <person name="Preisinger C."/>
            <person name="Peng M."/>
            <person name="Polat A.N."/>
            <person name="Heck A.J."/>
            <person name="Mohammed S."/>
        </authorList>
    </citation>
    <scope>PHOSPHORYLATION [LARGE SCALE ANALYSIS] AT SER-280; SER-287 AND SER-300</scope>
    <scope>IDENTIFICATION BY MASS SPECTROMETRY [LARGE SCALE ANALYSIS]</scope>
    <source>
        <tissue>Cervix carcinoma</tissue>
        <tissue>Erythroleukemia</tissue>
    </source>
</reference>
<reference key="12">
    <citation type="journal article" date="2014" name="Eur. J. Med. Genet.">
        <title>An intragenic deletion of the NFIA gene in a patient with a hypoplastic corpus callosum, craniofacial abnormalities and urinary tract defects.</title>
        <authorList>
            <person name="Rao A."/>
            <person name="O'Donnell S."/>
            <person name="Bain N."/>
            <person name="Meldrum C."/>
            <person name="Shorter D."/>
            <person name="Goel H."/>
        </authorList>
    </citation>
    <scope>INVOLVEMENT IN BRMUTD</scope>
</reference>
<reference key="13">
    <citation type="journal article" date="2014" name="J. Proteomics">
        <title>An enzyme assisted RP-RPLC approach for in-depth analysis of human liver phosphoproteome.</title>
        <authorList>
            <person name="Bian Y."/>
            <person name="Song C."/>
            <person name="Cheng K."/>
            <person name="Dong M."/>
            <person name="Wang F."/>
            <person name="Huang J."/>
            <person name="Sun D."/>
            <person name="Wang L."/>
            <person name="Ye M."/>
            <person name="Zou H."/>
        </authorList>
    </citation>
    <scope>PHOSPHORYLATION [LARGE SCALE ANALYSIS] AT SER-265; SER-280; SER-287; SER-300; SER-469 AND THR-471</scope>
    <scope>PHOSPHORYLATION [LARGE SCALE ANALYSIS] AT SER-469 (ISOFORM 2)</scope>
    <scope>IDENTIFICATION BY MASS SPECTROMETRY [LARGE SCALE ANALYSIS]</scope>
    <source>
        <tissue>Liver</tissue>
    </source>
</reference>
<reference key="14">
    <citation type="journal article" date="2015" name="Hum. Genome Var.">
        <title>Truncating mutation in NFIA causes brain malformation and urinary tract defects.</title>
        <authorList>
            <person name="Negishi Y."/>
            <person name="Miya F."/>
            <person name="Hattori A."/>
            <person name="Mizuno K."/>
            <person name="Hori I."/>
            <person name="Ando N."/>
            <person name="Okamoto N."/>
            <person name="Kato M."/>
            <person name="Tsunoda T."/>
            <person name="Yamasaki M."/>
            <person name="Kanemura Y."/>
            <person name="Kosaki K."/>
            <person name="Saitoh S."/>
        </authorList>
    </citation>
    <scope>INVOLVEMENT IN BRMUTD</scope>
</reference>
<reference key="15">
    <citation type="journal article" date="2020" name="Cell. Mol. Life Sci.">
        <title>The evolution of the 9aaTAD domain in Sp2 proteins: inactivation with valines and intron reservoirs.</title>
        <authorList>
            <person name="Piskacek M."/>
            <person name="Havelka M."/>
            <person name="Jendruchova K."/>
            <person name="Knight A."/>
            <person name="Keegan L.P."/>
        </authorList>
    </citation>
    <scope>9AATAD MOTIF</scope>
</reference>
<sequence>MYSPLCLTQDEFHPFIEALLPHVRAFAYTWFNLQARKRKYFKKHEKRMSKEEERAVKDELLSEKPEVKQKWASRLLAKLRKDIRPEYREDFVLTVTGKKPPCCVLSNPDQKGKMRRIDCLRQADKVWRLDLVMVILFKGIPLESTDGERLVKSPQCSNPGLCVQPHHIGVSVKELDLYLAYFVHAADSSQSESPSQPSDADIKDQPENGHLGFQDSFVTSGVFSVTELVRVSQTPIAAGTGPNFSLSDLESSSYYSMSPGAMRRSLPSTSSTSSTKRLKSVEDEMDSPGEEPFYTGQGRSPGSGSQSSGWHEVEPGMPSPTTLKKSEKSGFSSPSPSQTSSLGTAFTQHHRPVITGPRASPHATPSTLHFPTSPIIQQPGPYFSHPAIRYHPQETLKEFVQLVCPDAGQQAGQVGFLNPNGSSQGKVHNPFLPTPMLPPPPPPPMARPVPLPVPDTKPPTTSTEGGAASPTSPTYSTPSTSPANRFVSVGPRDPSFVNIPQQTQSWYLG</sequence>
<gene>
    <name type="primary">NFIA</name>
    <name type="synonym">KIAA1439</name>
</gene>
<feature type="chain" id="PRO_0000100191" description="Nuclear factor 1 A-type">
    <location>
        <begin position="1"/>
        <end position="509"/>
    </location>
</feature>
<feature type="DNA-binding region" description="CTF/NF-I" evidence="3">
    <location>
        <begin position="1"/>
        <end position="194"/>
    </location>
</feature>
<feature type="region of interest" description="Disordered" evidence="4">
    <location>
        <begin position="189"/>
        <end position="211"/>
    </location>
</feature>
<feature type="region of interest" description="Disordered" evidence="4">
    <location>
        <begin position="259"/>
        <end position="345"/>
    </location>
</feature>
<feature type="region of interest" description="Disordered" evidence="4">
    <location>
        <begin position="352"/>
        <end position="371"/>
    </location>
</feature>
<feature type="region of interest" description="Disordered" evidence="4">
    <location>
        <begin position="435"/>
        <end position="509"/>
    </location>
</feature>
<feature type="short sequence motif" description="9aaTAD" evidence="7">
    <location>
        <begin position="394"/>
        <end position="402"/>
    </location>
</feature>
<feature type="compositionally biased region" description="Low complexity" evidence="4">
    <location>
        <begin position="189"/>
        <end position="199"/>
    </location>
</feature>
<feature type="compositionally biased region" description="Low complexity" evidence="4">
    <location>
        <begin position="259"/>
        <end position="275"/>
    </location>
</feature>
<feature type="compositionally biased region" description="Low complexity" evidence="4">
    <location>
        <begin position="296"/>
        <end position="309"/>
    </location>
</feature>
<feature type="compositionally biased region" description="Low complexity" evidence="4">
    <location>
        <begin position="329"/>
        <end position="341"/>
    </location>
</feature>
<feature type="compositionally biased region" description="Pro residues" evidence="4">
    <location>
        <begin position="435"/>
        <end position="457"/>
    </location>
</feature>
<feature type="compositionally biased region" description="Low complexity" evidence="4">
    <location>
        <begin position="469"/>
        <end position="482"/>
    </location>
</feature>
<feature type="compositionally biased region" description="Polar residues" evidence="4">
    <location>
        <begin position="498"/>
        <end position="509"/>
    </location>
</feature>
<feature type="modified residue" description="Phosphoserine" evidence="12">
    <location>
        <position position="258"/>
    </location>
</feature>
<feature type="modified residue" description="Phosphoserine" evidence="12 14 16">
    <location>
        <position position="265"/>
    </location>
</feature>
<feature type="modified residue" description="Phosphoserine" evidence="12 13 14 15 16">
    <location>
        <position position="280"/>
    </location>
</feature>
<feature type="modified residue" description="Phosphoserine" evidence="11 12 13 14 15 16">
    <location>
        <position position="287"/>
    </location>
</feature>
<feature type="modified residue" description="Phosphoserine" evidence="12 14 15 16">
    <location>
        <position position="300"/>
    </location>
</feature>
<feature type="modified residue" description="Phosphoserine" evidence="1">
    <location>
        <position position="305"/>
    </location>
</feature>
<feature type="modified residue" description="Phosphoserine" evidence="12">
    <location>
        <position position="319"/>
    </location>
</feature>
<feature type="modified residue" description="Phosphoserine" evidence="14">
    <location>
        <position position="360"/>
    </location>
</feature>
<feature type="modified residue" description="Asymmetric dimethylarginine" evidence="2">
    <location>
        <position position="389"/>
    </location>
</feature>
<feature type="modified residue" description="Phosphoserine" evidence="16">
    <location>
        <position position="469"/>
    </location>
</feature>
<feature type="modified residue" description="Phosphothreonine" evidence="16">
    <location>
        <position position="471"/>
    </location>
</feature>
<feature type="splice variant" id="VSP_046884" description="In isoform 3." evidence="8">
    <original>MYSPLCLTQ</original>
    <variation>M</variation>
    <location>
        <begin position="1"/>
        <end position="9"/>
    </location>
</feature>
<feature type="splice variant" id="VSP_046883" description="In isoform 4." evidence="8">
    <original>M</original>
    <variation>MQMCRPASSSVLYVPTRWPGGCGATWQSCPSPPPRRTRIPQRPAVM</variation>
    <location>
        <position position="1"/>
    </location>
</feature>
<feature type="splice variant" id="VSP_036620" description="In isoform 2." evidence="9">
    <original>TYSTPSTSPANRFVSVGPRDPSFVNIPQQTQSWYLG</original>
    <variation>ILVPGIKVAASHHPPDRPPDPFSTL</variation>
    <location>
        <begin position="474"/>
        <end position="509"/>
    </location>
</feature>
<feature type="sequence conflict" description="In Ref. 2; BAG61305." evidence="10" ref="2">
    <original>E</original>
    <variation>G</variation>
    <location>
        <position position="143"/>
    </location>
</feature>
<feature type="sequence conflict" description="In Ref. 6; AAA93124." evidence="10" ref="6">
    <original>A</original>
    <variation>G</variation>
    <location>
        <position position="186"/>
    </location>
</feature>
<feature type="sequence conflict" description="In Ref. 6; AAA93124." evidence="10" ref="6">
    <original>TGPN</original>
    <variation>PAPT</variation>
    <location>
        <begin position="240"/>
        <end position="243"/>
    </location>
</feature>
<feature type="sequence conflict" description="In Ref. 2; BAG61515." evidence="10" ref="2">
    <original>S</original>
    <variation>P</variation>
    <location>
        <position position="274"/>
    </location>
</feature>
<feature type="sequence conflict" description="In Ref. 2; BAG61305." evidence="10" ref="2">
    <original>F</original>
    <variation>L</variation>
    <location>
        <position position="331"/>
    </location>
</feature>
<feature type="sequence conflict" description="In Ref. 2; BAG61305." evidence="10" ref="2">
    <original>R</original>
    <variation>G</variation>
    <location>
        <position position="358"/>
    </location>
</feature>
<feature type="sequence conflict" description="In Ref. 2; BAG61305." evidence="10" ref="2">
    <original>K</original>
    <variation>R</variation>
    <location>
        <position position="426"/>
    </location>
</feature>
<feature type="modified residue" description="Phosphoserine" evidence="16">
    <location sequence="Q12857-2">
        <position position="469"/>
    </location>
</feature>
<dbReference type="EMBL" id="AB037860">
    <property type="protein sequence ID" value="BAA92677.1"/>
    <property type="status" value="ALT_INIT"/>
    <property type="molecule type" value="mRNA"/>
</dbReference>
<dbReference type="EMBL" id="AK299289">
    <property type="protein sequence ID" value="BAG61305.1"/>
    <property type="molecule type" value="mRNA"/>
</dbReference>
<dbReference type="EMBL" id="AK299579">
    <property type="protein sequence ID" value="BAG61515.1"/>
    <property type="molecule type" value="mRNA"/>
</dbReference>
<dbReference type="EMBL" id="AC092784">
    <property type="status" value="NOT_ANNOTATED_CDS"/>
    <property type="molecule type" value="Genomic_DNA"/>
</dbReference>
<dbReference type="EMBL" id="AC096534">
    <property type="status" value="NOT_ANNOTATED_CDS"/>
    <property type="molecule type" value="Genomic_DNA"/>
</dbReference>
<dbReference type="EMBL" id="AC096947">
    <property type="status" value="NOT_ANNOTATED_CDS"/>
    <property type="molecule type" value="Genomic_DNA"/>
</dbReference>
<dbReference type="EMBL" id="AC099792">
    <property type="status" value="NOT_ANNOTATED_CDS"/>
    <property type="molecule type" value="Genomic_DNA"/>
</dbReference>
<dbReference type="EMBL" id="AL096888">
    <property type="status" value="NOT_ANNOTATED_CDS"/>
    <property type="molecule type" value="Genomic_DNA"/>
</dbReference>
<dbReference type="EMBL" id="AL355795">
    <property type="status" value="NOT_ANNOTATED_CDS"/>
    <property type="molecule type" value="Genomic_DNA"/>
</dbReference>
<dbReference type="EMBL" id="AL445198">
    <property type="status" value="NOT_ANNOTATED_CDS"/>
    <property type="molecule type" value="Genomic_DNA"/>
</dbReference>
<dbReference type="EMBL" id="AL445432">
    <property type="status" value="NOT_ANNOTATED_CDS"/>
    <property type="molecule type" value="Genomic_DNA"/>
</dbReference>
<dbReference type="EMBL" id="CH471059">
    <property type="protein sequence ID" value="EAX06601.1"/>
    <property type="molecule type" value="Genomic_DNA"/>
</dbReference>
<dbReference type="EMBL" id="BC022264">
    <property type="protein sequence ID" value="AAH22264.1"/>
    <property type="molecule type" value="mRNA"/>
</dbReference>
<dbReference type="EMBL" id="U07809">
    <property type="protein sequence ID" value="AAA93124.1"/>
    <property type="molecule type" value="mRNA"/>
</dbReference>
<dbReference type="CCDS" id="CCDS44156.1">
    <molecule id="Q12857-1"/>
</dbReference>
<dbReference type="CCDS" id="CCDS53321.1">
    <molecule id="Q12857-3"/>
</dbReference>
<dbReference type="CCDS" id="CCDS53322.1">
    <molecule id="Q12857-4"/>
</dbReference>
<dbReference type="CCDS" id="CCDS615.1">
    <molecule id="Q12857-2"/>
</dbReference>
<dbReference type="RefSeq" id="NP_001128145.1">
    <molecule id="Q12857-1"/>
    <property type="nucleotide sequence ID" value="NM_001134673.4"/>
</dbReference>
<dbReference type="RefSeq" id="NP_001138983.1">
    <molecule id="Q12857-3"/>
    <property type="nucleotide sequence ID" value="NM_001145511.2"/>
</dbReference>
<dbReference type="RefSeq" id="NP_001138984.1">
    <molecule id="Q12857-4"/>
    <property type="nucleotide sequence ID" value="NM_001145512.2"/>
</dbReference>
<dbReference type="RefSeq" id="NP_005586.1">
    <molecule id="Q12857-2"/>
    <property type="nucleotide sequence ID" value="NM_005595.5"/>
</dbReference>
<dbReference type="SMR" id="Q12857"/>
<dbReference type="BioGRID" id="110847">
    <property type="interactions" value="188"/>
</dbReference>
<dbReference type="FunCoup" id="Q12857">
    <property type="interactions" value="2138"/>
</dbReference>
<dbReference type="IntAct" id="Q12857">
    <property type="interactions" value="135"/>
</dbReference>
<dbReference type="MINT" id="Q12857"/>
<dbReference type="STRING" id="9606.ENSP00000360231"/>
<dbReference type="GlyCosmos" id="Q12857">
    <property type="glycosylation" value="3 sites, 2 glycans"/>
</dbReference>
<dbReference type="GlyGen" id="Q12857">
    <property type="glycosylation" value="24 sites, 2 O-linked glycans (22 sites)"/>
</dbReference>
<dbReference type="iPTMnet" id="Q12857"/>
<dbReference type="PhosphoSitePlus" id="Q12857"/>
<dbReference type="BioMuta" id="NFIA"/>
<dbReference type="DMDM" id="14194959"/>
<dbReference type="jPOST" id="Q12857"/>
<dbReference type="MassIVE" id="Q12857"/>
<dbReference type="PaxDb" id="9606-ENSP00000360231"/>
<dbReference type="PeptideAtlas" id="Q12857"/>
<dbReference type="ProteomicsDB" id="25418"/>
<dbReference type="ProteomicsDB" id="30217"/>
<dbReference type="ProteomicsDB" id="58986">
    <molecule id="Q12857-1"/>
</dbReference>
<dbReference type="ProteomicsDB" id="58987">
    <molecule id="Q12857-2"/>
</dbReference>
<dbReference type="Pumba" id="Q12857"/>
<dbReference type="Antibodypedia" id="1812">
    <property type="antibodies" value="288 antibodies from 31 providers"/>
</dbReference>
<dbReference type="DNASU" id="4774"/>
<dbReference type="Ensembl" id="ENST00000371187.7">
    <molecule id="Q12857-2"/>
    <property type="protein sequence ID" value="ENSP00000360229.3"/>
    <property type="gene ID" value="ENSG00000162599.18"/>
</dbReference>
<dbReference type="Ensembl" id="ENST00000371189.8">
    <molecule id="Q12857-4"/>
    <property type="protein sequence ID" value="ENSP00000360231.3"/>
    <property type="gene ID" value="ENSG00000162599.18"/>
</dbReference>
<dbReference type="Ensembl" id="ENST00000403491.8">
    <molecule id="Q12857-1"/>
    <property type="protein sequence ID" value="ENSP00000384523.3"/>
    <property type="gene ID" value="ENSG00000162599.18"/>
</dbReference>
<dbReference type="Ensembl" id="ENST00000407417.7">
    <molecule id="Q12857-3"/>
    <property type="protein sequence ID" value="ENSP00000384680.2"/>
    <property type="gene ID" value="ENSG00000162599.18"/>
</dbReference>
<dbReference type="GeneID" id="4774"/>
<dbReference type="KEGG" id="hsa:4774"/>
<dbReference type="MANE-Select" id="ENST00000403491.8">
    <property type="protein sequence ID" value="ENSP00000384523.3"/>
    <property type="RefSeq nucleotide sequence ID" value="NM_001134673.4"/>
    <property type="RefSeq protein sequence ID" value="NP_001128145.1"/>
</dbReference>
<dbReference type="UCSC" id="uc001czv.4">
    <molecule id="Q12857-1"/>
    <property type="organism name" value="human"/>
</dbReference>
<dbReference type="AGR" id="HGNC:7784"/>
<dbReference type="CTD" id="4774"/>
<dbReference type="DisGeNET" id="4774"/>
<dbReference type="GeneCards" id="NFIA"/>
<dbReference type="GeneReviews" id="NFIA"/>
<dbReference type="HGNC" id="HGNC:7784">
    <property type="gene designation" value="NFIA"/>
</dbReference>
<dbReference type="HPA" id="ENSG00000162599">
    <property type="expression patterns" value="Low tissue specificity"/>
</dbReference>
<dbReference type="MalaCards" id="NFIA"/>
<dbReference type="MIM" id="600727">
    <property type="type" value="gene"/>
</dbReference>
<dbReference type="MIM" id="613735">
    <property type="type" value="phenotype"/>
</dbReference>
<dbReference type="neXtProt" id="NX_Q12857"/>
<dbReference type="OpenTargets" id="ENSG00000162599"/>
<dbReference type="Orphanet" id="401986">
    <property type="disease" value="1p31p32 microdeletion syndrome"/>
</dbReference>
<dbReference type="PharmGKB" id="PA31590"/>
<dbReference type="VEuPathDB" id="HostDB:ENSG00000162599"/>
<dbReference type="eggNOG" id="KOG3663">
    <property type="taxonomic scope" value="Eukaryota"/>
</dbReference>
<dbReference type="GeneTree" id="ENSGT00950000182916"/>
<dbReference type="InParanoid" id="Q12857"/>
<dbReference type="OMA" id="XSPHATP"/>
<dbReference type="OrthoDB" id="10055441at2759"/>
<dbReference type="PAN-GO" id="Q12857">
    <property type="GO annotations" value="4 GO annotations based on evolutionary models"/>
</dbReference>
<dbReference type="PhylomeDB" id="Q12857"/>
<dbReference type="TreeFam" id="TF313889"/>
<dbReference type="PathwayCommons" id="Q12857"/>
<dbReference type="Reactome" id="R-HSA-73980">
    <property type="pathway name" value="RNA Polymerase III Transcription Termination"/>
</dbReference>
<dbReference type="Reactome" id="R-HSA-749476">
    <property type="pathway name" value="RNA Polymerase III Abortive And Retractive Initiation"/>
</dbReference>
<dbReference type="SignaLink" id="Q12857"/>
<dbReference type="SIGNOR" id="Q12857"/>
<dbReference type="BioGRID-ORCS" id="4774">
    <property type="hits" value="23 hits in 1192 CRISPR screens"/>
</dbReference>
<dbReference type="ChiTaRS" id="NFIA">
    <property type="organism name" value="human"/>
</dbReference>
<dbReference type="GeneWiki" id="NFIA"/>
<dbReference type="GenomeRNAi" id="4774"/>
<dbReference type="Pharos" id="Q12857">
    <property type="development level" value="Tbio"/>
</dbReference>
<dbReference type="PRO" id="PR:Q12857"/>
<dbReference type="Proteomes" id="UP000005640">
    <property type="component" value="Chromosome 1"/>
</dbReference>
<dbReference type="RNAct" id="Q12857">
    <property type="molecule type" value="protein"/>
</dbReference>
<dbReference type="Bgee" id="ENSG00000162599">
    <property type="expression patterns" value="Expressed in medial globus pallidus and 206 other cell types or tissues"/>
</dbReference>
<dbReference type="ExpressionAtlas" id="Q12857">
    <property type="expression patterns" value="baseline and differential"/>
</dbReference>
<dbReference type="GO" id="GO:0030054">
    <property type="term" value="C:cell junction"/>
    <property type="evidence" value="ECO:0000314"/>
    <property type="project" value="HPA"/>
</dbReference>
<dbReference type="GO" id="GO:0000785">
    <property type="term" value="C:chromatin"/>
    <property type="evidence" value="ECO:0000247"/>
    <property type="project" value="NTNU_SB"/>
</dbReference>
<dbReference type="GO" id="GO:0005654">
    <property type="term" value="C:nucleoplasm"/>
    <property type="evidence" value="ECO:0000314"/>
    <property type="project" value="HPA"/>
</dbReference>
<dbReference type="GO" id="GO:0005634">
    <property type="term" value="C:nucleus"/>
    <property type="evidence" value="ECO:0000314"/>
    <property type="project" value="UniProtKB"/>
</dbReference>
<dbReference type="GO" id="GO:0003682">
    <property type="term" value="F:chromatin binding"/>
    <property type="evidence" value="ECO:0007669"/>
    <property type="project" value="Ensembl"/>
</dbReference>
<dbReference type="GO" id="GO:0001228">
    <property type="term" value="F:DNA-binding transcription activator activity, RNA polymerase II-specific"/>
    <property type="evidence" value="ECO:0000314"/>
    <property type="project" value="NTNU_SB"/>
</dbReference>
<dbReference type="GO" id="GO:0003700">
    <property type="term" value="F:DNA-binding transcription factor activity"/>
    <property type="evidence" value="ECO:0000303"/>
    <property type="project" value="UniProtKB"/>
</dbReference>
<dbReference type="GO" id="GO:0000981">
    <property type="term" value="F:DNA-binding transcription factor activity, RNA polymerase II-specific"/>
    <property type="evidence" value="ECO:0000247"/>
    <property type="project" value="NTNU_SB"/>
</dbReference>
<dbReference type="GO" id="GO:0140297">
    <property type="term" value="F:DNA-binding transcription factor binding"/>
    <property type="evidence" value="ECO:0000353"/>
    <property type="project" value="UniProtKB"/>
</dbReference>
<dbReference type="GO" id="GO:0000978">
    <property type="term" value="F:RNA polymerase II cis-regulatory region sequence-specific DNA binding"/>
    <property type="evidence" value="ECO:0000314"/>
    <property type="project" value="NTNU_SB"/>
</dbReference>
<dbReference type="GO" id="GO:0030509">
    <property type="term" value="P:BMP signaling pathway"/>
    <property type="evidence" value="ECO:0007669"/>
    <property type="project" value="Ensembl"/>
</dbReference>
<dbReference type="GO" id="GO:0051216">
    <property type="term" value="P:cartilage development"/>
    <property type="evidence" value="ECO:0007669"/>
    <property type="project" value="Ensembl"/>
</dbReference>
<dbReference type="GO" id="GO:0000902">
    <property type="term" value="P:cell morphogenesis"/>
    <property type="evidence" value="ECO:0007669"/>
    <property type="project" value="Ensembl"/>
</dbReference>
<dbReference type="GO" id="GO:0006260">
    <property type="term" value="P:DNA replication"/>
    <property type="evidence" value="ECO:0007669"/>
    <property type="project" value="UniProtKB-KW"/>
</dbReference>
<dbReference type="GO" id="GO:0010458">
    <property type="term" value="P:exit from mitosis"/>
    <property type="evidence" value="ECO:0007669"/>
    <property type="project" value="Ensembl"/>
</dbReference>
<dbReference type="GO" id="GO:0010467">
    <property type="term" value="P:gene expression"/>
    <property type="evidence" value="ECO:0007669"/>
    <property type="project" value="Ensembl"/>
</dbReference>
<dbReference type="GO" id="GO:0021780">
    <property type="term" value="P:glial cell fate specification"/>
    <property type="evidence" value="ECO:0007669"/>
    <property type="project" value="Ensembl"/>
</dbReference>
<dbReference type="GO" id="GO:0014009">
    <property type="term" value="P:glial cell proliferation"/>
    <property type="evidence" value="ECO:0007669"/>
    <property type="project" value="Ensembl"/>
</dbReference>
<dbReference type="GO" id="GO:0035108">
    <property type="term" value="P:limb morphogenesis"/>
    <property type="evidence" value="ECO:0007669"/>
    <property type="project" value="Ensembl"/>
</dbReference>
<dbReference type="GO" id="GO:0061351">
    <property type="term" value="P:neural precursor cell proliferation"/>
    <property type="evidence" value="ECO:0007669"/>
    <property type="project" value="Ensembl"/>
</dbReference>
<dbReference type="GO" id="GO:0048665">
    <property type="term" value="P:neuron fate specification"/>
    <property type="evidence" value="ECO:0007669"/>
    <property type="project" value="Ensembl"/>
</dbReference>
<dbReference type="GO" id="GO:0045944">
    <property type="term" value="P:positive regulation of transcription by RNA polymerase II"/>
    <property type="evidence" value="ECO:0000314"/>
    <property type="project" value="NTNU_SB"/>
</dbReference>
<dbReference type="GO" id="GO:0006355">
    <property type="term" value="P:regulation of DNA-templated transcription"/>
    <property type="evidence" value="ECO:0000303"/>
    <property type="project" value="UniProtKB"/>
</dbReference>
<dbReference type="GO" id="GO:0006357">
    <property type="term" value="P:regulation of transcription by RNA polymerase II"/>
    <property type="evidence" value="ECO:0000318"/>
    <property type="project" value="GO_Central"/>
</dbReference>
<dbReference type="GO" id="GO:0009611">
    <property type="term" value="P:response to wounding"/>
    <property type="evidence" value="ECO:0007669"/>
    <property type="project" value="Ensembl"/>
</dbReference>
<dbReference type="GO" id="GO:0060041">
    <property type="term" value="P:retina development in camera-type eye"/>
    <property type="evidence" value="ECO:0007669"/>
    <property type="project" value="Ensembl"/>
</dbReference>
<dbReference type="GO" id="GO:0060074">
    <property type="term" value="P:synapse maturation"/>
    <property type="evidence" value="ECO:0007669"/>
    <property type="project" value="Ensembl"/>
</dbReference>
<dbReference type="GO" id="GO:0072189">
    <property type="term" value="P:ureter development"/>
    <property type="evidence" value="ECO:0007669"/>
    <property type="project" value="Ensembl"/>
</dbReference>
<dbReference type="GO" id="GO:0019079">
    <property type="term" value="P:viral genome replication"/>
    <property type="evidence" value="ECO:0000303"/>
    <property type="project" value="UniProtKB"/>
</dbReference>
<dbReference type="InterPro" id="IPR000647">
    <property type="entry name" value="CTF/NFI"/>
</dbReference>
<dbReference type="InterPro" id="IPR020604">
    <property type="entry name" value="CTF/NFI_DNA-bd-dom"/>
</dbReference>
<dbReference type="InterPro" id="IPR019739">
    <property type="entry name" value="CTF/NFI_DNA-bd_CS"/>
</dbReference>
<dbReference type="InterPro" id="IPR019548">
    <property type="entry name" value="CTF/NFI_DNA-bd_N"/>
</dbReference>
<dbReference type="InterPro" id="IPR003619">
    <property type="entry name" value="MAD_homology1_Dwarfin-type"/>
</dbReference>
<dbReference type="PANTHER" id="PTHR11492:SF6">
    <property type="entry name" value="NUCLEAR FACTOR 1 A-TYPE"/>
    <property type="match status" value="1"/>
</dbReference>
<dbReference type="PANTHER" id="PTHR11492">
    <property type="entry name" value="NUCLEAR FACTOR I"/>
    <property type="match status" value="1"/>
</dbReference>
<dbReference type="Pfam" id="PF00859">
    <property type="entry name" value="CTF_NFI"/>
    <property type="match status" value="1"/>
</dbReference>
<dbReference type="Pfam" id="PF03165">
    <property type="entry name" value="MH1"/>
    <property type="match status" value="1"/>
</dbReference>
<dbReference type="Pfam" id="PF10524">
    <property type="entry name" value="NfI_DNAbd_pre-N"/>
    <property type="match status" value="1"/>
</dbReference>
<dbReference type="SMART" id="SM00523">
    <property type="entry name" value="DWA"/>
    <property type="match status" value="1"/>
</dbReference>
<dbReference type="PROSITE" id="PS00349">
    <property type="entry name" value="CTF_NFI_1"/>
    <property type="match status" value="1"/>
</dbReference>
<dbReference type="PROSITE" id="PS51080">
    <property type="entry name" value="CTF_NFI_2"/>
    <property type="match status" value="1"/>
</dbReference>
<protein>
    <recommendedName>
        <fullName>Nuclear factor 1 A-type</fullName>
        <shortName>NF1-A</shortName>
        <shortName>Nuclear factor 1/A</shortName>
    </recommendedName>
    <alternativeName>
        <fullName>CCAAT-box-binding transcription factor</fullName>
        <shortName>CTF</shortName>
    </alternativeName>
    <alternativeName>
        <fullName>Nuclear factor I/A</fullName>
        <shortName>NF-I/A</shortName>
        <shortName>NFI-A</shortName>
    </alternativeName>
    <alternativeName>
        <fullName>TGGCA-binding protein</fullName>
    </alternativeName>
</protein>